<feature type="initiator methionine" description="Removed" evidence="4">
    <location>
        <position position="1"/>
    </location>
</feature>
<feature type="chain" id="PRO_0000363225" description="Septin-8">
    <location>
        <begin position="2"/>
        <end position="442"/>
    </location>
</feature>
<feature type="domain" description="Septin-type G" evidence="6">
    <location>
        <begin position="41"/>
        <end position="307"/>
    </location>
</feature>
<feature type="region of interest" description="G1 motif" evidence="6">
    <location>
        <begin position="51"/>
        <end position="58"/>
    </location>
</feature>
<feature type="region of interest" description="G3 motif" evidence="6">
    <location>
        <begin position="103"/>
        <end position="106"/>
    </location>
</feature>
<feature type="region of interest" description="G4 motif" evidence="6">
    <location>
        <begin position="186"/>
        <end position="189"/>
    </location>
</feature>
<feature type="region of interest" description="Disordered" evidence="7">
    <location>
        <begin position="377"/>
        <end position="442"/>
    </location>
</feature>
<feature type="coiled-coil region" evidence="5">
    <location>
        <begin position="322"/>
        <end position="410"/>
    </location>
</feature>
<feature type="compositionally biased region" description="Basic and acidic residues" evidence="7">
    <location>
        <begin position="377"/>
        <end position="391"/>
    </location>
</feature>
<feature type="compositionally biased region" description="Polar residues" evidence="7">
    <location>
        <begin position="408"/>
        <end position="420"/>
    </location>
</feature>
<feature type="compositionally biased region" description="Polar residues" evidence="7">
    <location>
        <begin position="432"/>
        <end position="442"/>
    </location>
</feature>
<feature type="binding site" evidence="1">
    <location>
        <begin position="51"/>
        <end position="58"/>
    </location>
    <ligand>
        <name>GTP</name>
        <dbReference type="ChEBI" id="CHEBI:37565"/>
    </ligand>
</feature>
<feature type="binding site" evidence="1">
    <location>
        <position position="106"/>
    </location>
    <ligand>
        <name>GTP</name>
        <dbReference type="ChEBI" id="CHEBI:37565"/>
    </ligand>
</feature>
<feature type="binding site" evidence="1">
    <location>
        <begin position="187"/>
        <end position="195"/>
    </location>
    <ligand>
        <name>GTP</name>
        <dbReference type="ChEBI" id="CHEBI:37565"/>
    </ligand>
</feature>
<feature type="binding site" evidence="1">
    <location>
        <position position="241"/>
    </location>
    <ligand>
        <name>GTP</name>
        <dbReference type="ChEBI" id="CHEBI:37565"/>
    </ligand>
</feature>
<feature type="binding site" evidence="1">
    <location>
        <position position="256"/>
    </location>
    <ligand>
        <name>GTP</name>
        <dbReference type="ChEBI" id="CHEBI:37565"/>
    </ligand>
</feature>
<feature type="modified residue" description="N-acetylalanine" evidence="4">
    <location>
        <position position="2"/>
    </location>
</feature>
<feature type="modified residue" description="Phosphoserine" evidence="4">
    <location>
        <position position="10"/>
    </location>
</feature>
<sequence length="442" mass="51152">MAATDLERFSNAEAEPRSLSLGGHVGFDSLPDQLVSKSVTQGFSFNILCVGETGIGKSTLMNTLFNTTFETEEASHHEACVRLRPQTYDLQESNVQLKLTIVDAVGFGDQINKDESYRPIVDYIDAQFENYLQEELKIRRSLFDYHDTRIHVCLYFITPTGHSLKSLDLVTMKKLDSKVNIIPIIAKADTISKSELHKFKIKIMGELVSNGVQIYQFPTDDEAVAEINAVMNAHLPFAVVGSTEEVKVGNKLVRARQYPWGVVQVENENHCDFVKLREMLIRVNMEDLREQTHSRHYELYRRCKLEEMGFQDSDGDSQPFSLQETYEAKRKEFLSELQRKEEEMRQMFVNKVKETELELKEKERELHEKFEHLKRVHQEEKRKVEEKRRELEEETNAFNRRKAAVEALQSQALHATSQQPLRKDKDKKKASGWSSIYSVTIP</sequence>
<proteinExistence type="inferred from homology"/>
<organism>
    <name type="scientific">Callithrix jacchus</name>
    <name type="common">White-tufted-ear marmoset</name>
    <dbReference type="NCBI Taxonomy" id="9483"/>
    <lineage>
        <taxon>Eukaryota</taxon>
        <taxon>Metazoa</taxon>
        <taxon>Chordata</taxon>
        <taxon>Craniata</taxon>
        <taxon>Vertebrata</taxon>
        <taxon>Euteleostomi</taxon>
        <taxon>Mammalia</taxon>
        <taxon>Eutheria</taxon>
        <taxon>Euarchontoglires</taxon>
        <taxon>Primates</taxon>
        <taxon>Haplorrhini</taxon>
        <taxon>Platyrrhini</taxon>
        <taxon>Cebidae</taxon>
        <taxon>Callitrichinae</taxon>
        <taxon>Callithrix</taxon>
        <taxon>Callithrix</taxon>
    </lineage>
</organism>
<dbReference type="EMBL" id="DP000584">
    <property type="protein sequence ID" value="ABZ10527.1"/>
    <property type="molecule type" value="Genomic_DNA"/>
</dbReference>
<dbReference type="RefSeq" id="XP_035146761.1">
    <property type="nucleotide sequence ID" value="XM_035290870.2"/>
</dbReference>
<dbReference type="SMR" id="B0KWP7"/>
<dbReference type="FunCoup" id="B0KWP7">
    <property type="interactions" value="503"/>
</dbReference>
<dbReference type="STRING" id="9483.ENSCJAP00000056574"/>
<dbReference type="GeneID" id="100405800"/>
<dbReference type="eggNOG" id="KOG3859">
    <property type="taxonomic scope" value="Eukaryota"/>
</dbReference>
<dbReference type="InParanoid" id="B0KWP7"/>
<dbReference type="Proteomes" id="UP000008225">
    <property type="component" value="Unplaced"/>
</dbReference>
<dbReference type="GO" id="GO:0030424">
    <property type="term" value="C:axon"/>
    <property type="evidence" value="ECO:0007669"/>
    <property type="project" value="UniProtKB-SubCell"/>
</dbReference>
<dbReference type="GO" id="GO:0005856">
    <property type="term" value="C:cytoskeleton"/>
    <property type="evidence" value="ECO:0007669"/>
    <property type="project" value="UniProtKB-SubCell"/>
</dbReference>
<dbReference type="GO" id="GO:0098793">
    <property type="term" value="C:presynapse"/>
    <property type="evidence" value="ECO:0000250"/>
    <property type="project" value="UniProtKB"/>
</dbReference>
<dbReference type="GO" id="GO:0030672">
    <property type="term" value="C:synaptic vesicle membrane"/>
    <property type="evidence" value="ECO:0007669"/>
    <property type="project" value="UniProtKB-SubCell"/>
</dbReference>
<dbReference type="GO" id="GO:0005525">
    <property type="term" value="F:GTP binding"/>
    <property type="evidence" value="ECO:0007669"/>
    <property type="project" value="UniProtKB-KW"/>
</dbReference>
<dbReference type="GO" id="GO:0033157">
    <property type="term" value="P:regulation of intracellular protein transport"/>
    <property type="evidence" value="ECO:0000250"/>
    <property type="project" value="UniProtKB"/>
</dbReference>
<dbReference type="GO" id="GO:0031647">
    <property type="term" value="P:regulation of protein stability"/>
    <property type="evidence" value="ECO:0000250"/>
    <property type="project" value="UniProtKB"/>
</dbReference>
<dbReference type="GO" id="GO:0035542">
    <property type="term" value="P:regulation of SNARE complex assembly"/>
    <property type="evidence" value="ECO:0000250"/>
    <property type="project" value="UniProtKB"/>
</dbReference>
<dbReference type="CDD" id="cd01850">
    <property type="entry name" value="CDC_Septin"/>
    <property type="match status" value="1"/>
</dbReference>
<dbReference type="FunFam" id="3.40.50.300:FF:000036">
    <property type="entry name" value="septin-6 isoform X2"/>
    <property type="match status" value="1"/>
</dbReference>
<dbReference type="Gene3D" id="3.40.50.300">
    <property type="entry name" value="P-loop containing nucleotide triphosphate hydrolases"/>
    <property type="match status" value="1"/>
</dbReference>
<dbReference type="InterPro" id="IPR030379">
    <property type="entry name" value="G_SEPTIN_dom"/>
</dbReference>
<dbReference type="InterPro" id="IPR027417">
    <property type="entry name" value="P-loop_NTPase"/>
</dbReference>
<dbReference type="InterPro" id="IPR016491">
    <property type="entry name" value="Septin"/>
</dbReference>
<dbReference type="PANTHER" id="PTHR18884">
    <property type="entry name" value="SEPTIN"/>
    <property type="match status" value="1"/>
</dbReference>
<dbReference type="Pfam" id="PF00735">
    <property type="entry name" value="Septin"/>
    <property type="match status" value="1"/>
</dbReference>
<dbReference type="PIRSF" id="PIRSF006698">
    <property type="entry name" value="Septin"/>
    <property type="match status" value="1"/>
</dbReference>
<dbReference type="SUPFAM" id="SSF52540">
    <property type="entry name" value="P-loop containing nucleoside triphosphate hydrolases"/>
    <property type="match status" value="1"/>
</dbReference>
<dbReference type="PROSITE" id="PS51719">
    <property type="entry name" value="G_SEPTIN"/>
    <property type="match status" value="1"/>
</dbReference>
<evidence type="ECO:0000250" key="1"/>
<evidence type="ECO:0000250" key="2">
    <source>
        <dbReference type="UniProtKB" id="B0BNF1"/>
    </source>
</evidence>
<evidence type="ECO:0000250" key="3">
    <source>
        <dbReference type="UniProtKB" id="Q8CHH9"/>
    </source>
</evidence>
<evidence type="ECO:0000250" key="4">
    <source>
        <dbReference type="UniProtKB" id="Q92599"/>
    </source>
</evidence>
<evidence type="ECO:0000255" key="5"/>
<evidence type="ECO:0000255" key="6">
    <source>
        <dbReference type="PROSITE-ProRule" id="PRU01056"/>
    </source>
</evidence>
<evidence type="ECO:0000256" key="7">
    <source>
        <dbReference type="SAM" id="MobiDB-lite"/>
    </source>
</evidence>
<gene>
    <name evidence="4" type="primary">SEPTIN8</name>
    <name type="synonym">SEPT8</name>
</gene>
<protein>
    <recommendedName>
        <fullName>Septin-8</fullName>
    </recommendedName>
</protein>
<reference key="1">
    <citation type="submission" date="2008-02" db="EMBL/GenBank/DDBJ databases">
        <title>NISC comparative sequencing initiative.</title>
        <authorList>
            <person name="Antonellis A."/>
            <person name="Ayele K."/>
            <person name="Benjamin B."/>
            <person name="Blakesley R.W."/>
            <person name="Boakye A."/>
            <person name="Bouffard G.G."/>
            <person name="Brinkley C."/>
            <person name="Brooks S."/>
            <person name="Chu G."/>
            <person name="Coleman H."/>
            <person name="Engle J."/>
            <person name="Gestole M."/>
            <person name="Greene A."/>
            <person name="Guan X."/>
            <person name="Gupta J."/>
            <person name="Haghighi P."/>
            <person name="Han J."/>
            <person name="Hansen N."/>
            <person name="Ho S.-L."/>
            <person name="Hu P."/>
            <person name="Hunter G."/>
            <person name="Hurle B."/>
            <person name="Idol J.R."/>
            <person name="Kwong P."/>
            <person name="Laric P."/>
            <person name="Larson S."/>
            <person name="Lee-Lin S.-Q."/>
            <person name="Legaspi R."/>
            <person name="Madden M."/>
            <person name="Maduro Q.L."/>
            <person name="Maduro V.B."/>
            <person name="Margulies E.H."/>
            <person name="Masiello C."/>
            <person name="Maskeri B."/>
            <person name="McDowell J."/>
            <person name="Mojidi H.A."/>
            <person name="Mullikin J.C."/>
            <person name="Oestreicher J.S."/>
            <person name="Park M."/>
            <person name="Portnoy M.E."/>
            <person name="Prasad A."/>
            <person name="Puri O."/>
            <person name="Reddix-Dugue N."/>
            <person name="Schandler K."/>
            <person name="Schueler M.G."/>
            <person name="Sison C."/>
            <person name="Stantripop S."/>
            <person name="Stephen E."/>
            <person name="Taye A."/>
            <person name="Thomas J.W."/>
            <person name="Thomas P.J."/>
            <person name="Tsipouri V."/>
            <person name="Ung L."/>
            <person name="Vogt J.L."/>
            <person name="Wetherby K.D."/>
            <person name="Young A."/>
            <person name="Green E.D."/>
        </authorList>
    </citation>
    <scope>NUCLEOTIDE SEQUENCE [LARGE SCALE GENOMIC DNA]</scope>
</reference>
<keyword id="KW-0007">Acetylation</keyword>
<keyword id="KW-0966">Cell projection</keyword>
<keyword id="KW-0175">Coiled coil</keyword>
<keyword id="KW-0963">Cytoplasm</keyword>
<keyword id="KW-0968">Cytoplasmic vesicle</keyword>
<keyword id="KW-0206">Cytoskeleton</keyword>
<keyword id="KW-0342">GTP-binding</keyword>
<keyword id="KW-0472">Membrane</keyword>
<keyword id="KW-0547">Nucleotide-binding</keyword>
<keyword id="KW-0597">Phosphoprotein</keyword>
<keyword id="KW-1185">Reference proteome</keyword>
<keyword id="KW-0770">Synapse</keyword>
<name>SEPT8_CALJA</name>
<comment type="function">
    <text evidence="2 4">Filament-forming cytoskeletal GTPase (By similarity). May play a role in platelet secretion (By similarity). Seems to participate in the process of SNARE complex formation in synaptic vesicles (By similarity).</text>
</comment>
<comment type="subunit">
    <text evidence="2 3 4">Septins polymerize into heterooligomeric protein complexes that form filaments, and can associate with cellular membranes, actin filaments and microtubules. GTPase activity is required for filament formation (By similarity). Interacts with CDK14, SEPTIN4, SEPTIN5 and SEPTIN7 (By similarity). Interacts with VAMP2; the interaction inhibits interaction of VAMP2 with SYP (By similarity). Interacts with STX1A (By similarity).</text>
</comment>
<comment type="subcellular location">
    <subcellularLocation>
        <location evidence="2">Cytoplasm</location>
    </subcellularLocation>
    <subcellularLocation>
        <location evidence="1">Cytoplasm</location>
        <location evidence="1">Cytoskeleton</location>
    </subcellularLocation>
    <subcellularLocation>
        <location evidence="2">Synapse</location>
    </subcellularLocation>
    <subcellularLocation>
        <location evidence="2">Cell projection</location>
        <location evidence="2">Axon</location>
    </subcellularLocation>
    <subcellularLocation>
        <location evidence="2">Cytoplasmic vesicle</location>
        <location evidence="2">Secretory vesicle</location>
        <location evidence="2">Synaptic vesicle membrane</location>
    </subcellularLocation>
    <subcellularLocation>
        <location evidence="2">Presynapse</location>
    </subcellularLocation>
    <text evidence="2">Expressed in axons of immature neurons, localizes to synapses in mature neurons.</text>
</comment>
<comment type="similarity">
    <text evidence="6">Belongs to the TRAFAC class TrmE-Era-EngA-EngB-Septin-like GTPase superfamily. Septin GTPase family.</text>
</comment>
<accession>B0KWP7</accession>